<dbReference type="EC" id="4.1.1.39" evidence="1"/>
<dbReference type="EMBL" id="BA000001">
    <property type="protein sequence ID" value="BAA30036.1"/>
    <property type="molecule type" value="Genomic_DNA"/>
</dbReference>
<dbReference type="PIR" id="F71084">
    <property type="entry name" value="F71084"/>
</dbReference>
<dbReference type="PDB" id="2CWX">
    <property type="method" value="X-ray"/>
    <property type="resolution" value="2.00 A"/>
    <property type="chains" value="A/E=1-430"/>
</dbReference>
<dbReference type="PDB" id="2CXE">
    <property type="method" value="X-ray"/>
    <property type="resolution" value="3.00 A"/>
    <property type="chains" value="A/B/C/D=1-430"/>
</dbReference>
<dbReference type="PDB" id="2D69">
    <property type="method" value="X-ray"/>
    <property type="resolution" value="1.90 A"/>
    <property type="chains" value="A/B/D/E=1-430"/>
</dbReference>
<dbReference type="PDBsum" id="2CWX"/>
<dbReference type="PDBsum" id="2CXE"/>
<dbReference type="PDBsum" id="2D69"/>
<dbReference type="SMR" id="O58677"/>
<dbReference type="STRING" id="70601.gene:9377894"/>
<dbReference type="EnsemblBacteria" id="BAA30036">
    <property type="protein sequence ID" value="BAA30036"/>
    <property type="gene ID" value="BAA30036"/>
</dbReference>
<dbReference type="KEGG" id="pho:PH0939"/>
<dbReference type="eggNOG" id="arCOG04443">
    <property type="taxonomic scope" value="Archaea"/>
</dbReference>
<dbReference type="OrthoDB" id="52787at2157"/>
<dbReference type="BRENDA" id="4.1.1.39">
    <property type="organism ID" value="5244"/>
</dbReference>
<dbReference type="EvolutionaryTrace" id="O58677"/>
<dbReference type="Proteomes" id="UP000000752">
    <property type="component" value="Chromosome"/>
</dbReference>
<dbReference type="GO" id="GO:0000287">
    <property type="term" value="F:magnesium ion binding"/>
    <property type="evidence" value="ECO:0007669"/>
    <property type="project" value="UniProtKB-UniRule"/>
</dbReference>
<dbReference type="GO" id="GO:0016491">
    <property type="term" value="F:oxidoreductase activity"/>
    <property type="evidence" value="ECO:0007669"/>
    <property type="project" value="UniProtKB-KW"/>
</dbReference>
<dbReference type="GO" id="GO:0016984">
    <property type="term" value="F:ribulose-bisphosphate carboxylase activity"/>
    <property type="evidence" value="ECO:0007669"/>
    <property type="project" value="UniProtKB-UniRule"/>
</dbReference>
<dbReference type="GO" id="GO:0006196">
    <property type="term" value="P:AMP catabolic process"/>
    <property type="evidence" value="ECO:0007669"/>
    <property type="project" value="UniProtKB-UniRule"/>
</dbReference>
<dbReference type="GO" id="GO:0015977">
    <property type="term" value="P:carbon fixation"/>
    <property type="evidence" value="ECO:0007669"/>
    <property type="project" value="UniProtKB-KW"/>
</dbReference>
<dbReference type="CDD" id="cd08213">
    <property type="entry name" value="RuBisCO_large_III"/>
    <property type="match status" value="1"/>
</dbReference>
<dbReference type="Gene3D" id="3.20.20.110">
    <property type="entry name" value="Ribulose bisphosphate carboxylase, large subunit, C-terminal domain"/>
    <property type="match status" value="1"/>
</dbReference>
<dbReference type="Gene3D" id="3.30.70.150">
    <property type="entry name" value="RuBisCO large subunit, N-terminal domain"/>
    <property type="match status" value="1"/>
</dbReference>
<dbReference type="HAMAP" id="MF_01133">
    <property type="entry name" value="RuBisCO_L_type3"/>
    <property type="match status" value="1"/>
</dbReference>
<dbReference type="InterPro" id="IPR033966">
    <property type="entry name" value="RuBisCO"/>
</dbReference>
<dbReference type="InterPro" id="IPR017712">
    <property type="entry name" value="RuBisCO_III"/>
</dbReference>
<dbReference type="InterPro" id="IPR000685">
    <property type="entry name" value="RuBisCO_lsu_C"/>
</dbReference>
<dbReference type="InterPro" id="IPR036376">
    <property type="entry name" value="RuBisCO_lsu_C_sf"/>
</dbReference>
<dbReference type="InterPro" id="IPR017443">
    <property type="entry name" value="RuBisCO_lsu_fd_N"/>
</dbReference>
<dbReference type="InterPro" id="IPR036422">
    <property type="entry name" value="RuBisCO_lsu_N_sf"/>
</dbReference>
<dbReference type="NCBIfam" id="NF003252">
    <property type="entry name" value="PRK04208.1"/>
    <property type="match status" value="1"/>
</dbReference>
<dbReference type="NCBIfam" id="TIGR03326">
    <property type="entry name" value="rubisco_III"/>
    <property type="match status" value="1"/>
</dbReference>
<dbReference type="PANTHER" id="PTHR42704">
    <property type="entry name" value="RIBULOSE BISPHOSPHATE CARBOXYLASE"/>
    <property type="match status" value="1"/>
</dbReference>
<dbReference type="PANTHER" id="PTHR42704:SF17">
    <property type="entry name" value="RIBULOSE BISPHOSPHATE CARBOXYLASE LARGE CHAIN"/>
    <property type="match status" value="1"/>
</dbReference>
<dbReference type="Pfam" id="PF00016">
    <property type="entry name" value="RuBisCO_large"/>
    <property type="match status" value="1"/>
</dbReference>
<dbReference type="Pfam" id="PF02788">
    <property type="entry name" value="RuBisCO_large_N"/>
    <property type="match status" value="1"/>
</dbReference>
<dbReference type="SFLD" id="SFLDG01052">
    <property type="entry name" value="RuBisCO"/>
    <property type="match status" value="1"/>
</dbReference>
<dbReference type="SFLD" id="SFLDS00014">
    <property type="entry name" value="RuBisCO"/>
    <property type="match status" value="2"/>
</dbReference>
<dbReference type="SFLD" id="SFLDG00301">
    <property type="entry name" value="RuBisCO-like_proteins"/>
    <property type="match status" value="1"/>
</dbReference>
<dbReference type="SUPFAM" id="SSF51649">
    <property type="entry name" value="RuBisCo, C-terminal domain"/>
    <property type="match status" value="1"/>
</dbReference>
<dbReference type="SUPFAM" id="SSF54966">
    <property type="entry name" value="RuBisCO, large subunit, small (N-terminal) domain"/>
    <property type="match status" value="1"/>
</dbReference>
<sequence length="430" mass="48247">MMVLRMKVEWYLDFVDLNYEPGRDELIVEYYFEPNGVSPEEAAGRIASESSIGTWTTLWKLPEMAKRSMAKVFYLEKHGEGYIAKIAYPLTLFEEGSLVQLFSAVAGNVFGMKALKNLRLLDFHPPYEYLRHFKGPQFGVQGIREFMGVKDRPLTATVPKPKMGWSVEEYAEIAYELWSGGIDLLKDDENFTSFPFNRFEERVRKLYRVRDRVEAETGETKEYLINITGPVNIMEKRAEMVANEGGQYVMIDIVVAGWSALQYMREVTEDLGLAIHAHRAMHAAFTRNPRHGITMLALAKAARMIGVDQIHTGTAVGKMAGNYEEIKRINDFLLSKWEHIRPVFPVASGGLHPGLMPELIRLFGKDLVIQAGGGVMGHPDGPRAGAKALRDAIDAAIEGVDLDEKAKSSPELKKSLREVGLSKAKVGVQH</sequence>
<organism>
    <name type="scientific">Pyrococcus horikoshii (strain ATCC 700860 / DSM 12428 / JCM 9974 / NBRC 100139 / OT-3)</name>
    <dbReference type="NCBI Taxonomy" id="70601"/>
    <lineage>
        <taxon>Archaea</taxon>
        <taxon>Methanobacteriati</taxon>
        <taxon>Methanobacteriota</taxon>
        <taxon>Thermococci</taxon>
        <taxon>Thermococcales</taxon>
        <taxon>Thermococcaceae</taxon>
        <taxon>Pyrococcus</taxon>
    </lineage>
</organism>
<feature type="chain" id="PRO_0000062677" description="Ribulose bisphosphate carboxylase">
    <location>
        <begin position="1"/>
        <end position="430"/>
    </location>
</feature>
<feature type="active site" description="Proton acceptor" evidence="1">
    <location>
        <position position="160"/>
    </location>
</feature>
<feature type="active site" description="Proton acceptor" evidence="1">
    <location>
        <position position="278"/>
    </location>
</feature>
<feature type="binding site" evidence="1">
    <location>
        <position position="162"/>
    </location>
    <ligand>
        <name>substrate</name>
    </ligand>
</feature>
<feature type="binding site" description="via carbamate group" evidence="1">
    <location>
        <position position="186"/>
    </location>
    <ligand>
        <name>Mg(2+)</name>
        <dbReference type="ChEBI" id="CHEBI:18420"/>
    </ligand>
</feature>
<feature type="binding site" evidence="1">
    <location>
        <position position="188"/>
    </location>
    <ligand>
        <name>Mg(2+)</name>
        <dbReference type="ChEBI" id="CHEBI:18420"/>
    </ligand>
</feature>
<feature type="binding site" evidence="1">
    <location>
        <position position="189"/>
    </location>
    <ligand>
        <name>Mg(2+)</name>
        <dbReference type="ChEBI" id="CHEBI:18420"/>
    </ligand>
</feature>
<feature type="binding site" evidence="1">
    <location>
        <position position="279"/>
    </location>
    <ligand>
        <name>substrate</name>
    </ligand>
</feature>
<feature type="binding site" evidence="1">
    <location>
        <position position="311"/>
    </location>
    <ligand>
        <name>substrate</name>
    </ligand>
</feature>
<feature type="binding site" evidence="1">
    <location>
        <begin position="348"/>
        <end position="350"/>
    </location>
    <ligand>
        <name>substrate</name>
    </ligand>
</feature>
<feature type="binding site" evidence="1">
    <location>
        <begin position="370"/>
        <end position="373"/>
    </location>
    <ligand>
        <name>substrate</name>
    </ligand>
</feature>
<feature type="site" description="Transition state stabilizer" evidence="1">
    <location>
        <position position="318"/>
    </location>
</feature>
<feature type="modified residue" description="N6-carboxylysine" evidence="1">
    <location>
        <position position="186"/>
    </location>
</feature>
<feature type="strand" evidence="3">
    <location>
        <begin position="7"/>
        <end position="9"/>
    </location>
</feature>
<feature type="helix" evidence="3">
    <location>
        <begin position="11"/>
        <end position="14"/>
    </location>
</feature>
<feature type="strand" evidence="3">
    <location>
        <begin position="25"/>
        <end position="37"/>
    </location>
</feature>
<feature type="helix" evidence="3">
    <location>
        <begin position="39"/>
        <end position="49"/>
    </location>
</feature>
<feature type="turn" evidence="3">
    <location>
        <begin position="50"/>
        <end position="52"/>
    </location>
</feature>
<feature type="strand" evidence="3">
    <location>
        <begin position="55"/>
        <end position="59"/>
    </location>
</feature>
<feature type="helix" evidence="2">
    <location>
        <begin position="63"/>
        <end position="65"/>
    </location>
</feature>
<feature type="helix" evidence="3">
    <location>
        <begin position="66"/>
        <end position="68"/>
    </location>
</feature>
<feature type="strand" evidence="3">
    <location>
        <begin position="71"/>
        <end position="78"/>
    </location>
</feature>
<feature type="strand" evidence="3">
    <location>
        <begin position="81"/>
        <end position="88"/>
    </location>
</feature>
<feature type="helix" evidence="3">
    <location>
        <begin position="90"/>
        <end position="92"/>
    </location>
</feature>
<feature type="helix" evidence="3">
    <location>
        <begin position="98"/>
        <end position="105"/>
    </location>
</feature>
<feature type="helix" evidence="3">
    <location>
        <begin position="108"/>
        <end position="111"/>
    </location>
</feature>
<feature type="strand" evidence="3">
    <location>
        <begin position="115"/>
        <end position="124"/>
    </location>
</feature>
<feature type="helix" evidence="3">
    <location>
        <begin position="127"/>
        <end position="130"/>
    </location>
</feature>
<feature type="helix" evidence="3">
    <location>
        <begin position="139"/>
        <end position="147"/>
    </location>
</feature>
<feature type="strand" evidence="2">
    <location>
        <begin position="150"/>
        <end position="152"/>
    </location>
</feature>
<feature type="strand" evidence="3">
    <location>
        <begin position="154"/>
        <end position="157"/>
    </location>
</feature>
<feature type="strand" evidence="3">
    <location>
        <begin position="160"/>
        <end position="163"/>
    </location>
</feature>
<feature type="helix" evidence="3">
    <location>
        <begin position="167"/>
        <end position="179"/>
    </location>
</feature>
<feature type="strand" evidence="3">
    <location>
        <begin position="183"/>
        <end position="186"/>
    </location>
</feature>
<feature type="helix" evidence="3">
    <location>
        <begin position="199"/>
        <end position="217"/>
    </location>
</feature>
<feature type="strand" evidence="3">
    <location>
        <begin position="222"/>
        <end position="224"/>
    </location>
</feature>
<feature type="helix" evidence="3">
    <location>
        <begin position="231"/>
        <end position="243"/>
    </location>
</feature>
<feature type="strand" evidence="3">
    <location>
        <begin position="248"/>
        <end position="252"/>
    </location>
</feature>
<feature type="helix" evidence="3">
    <location>
        <begin position="253"/>
        <end position="256"/>
    </location>
</feature>
<feature type="helix" evidence="3">
    <location>
        <begin position="258"/>
        <end position="271"/>
    </location>
</feature>
<feature type="strand" evidence="3">
    <location>
        <begin position="274"/>
        <end position="278"/>
    </location>
</feature>
<feature type="turn" evidence="3">
    <location>
        <begin position="280"/>
        <end position="282"/>
    </location>
</feature>
<feature type="helix" evidence="3">
    <location>
        <begin position="283"/>
        <end position="286"/>
    </location>
</feature>
<feature type="strand" evidence="3">
    <location>
        <begin position="291"/>
        <end position="293"/>
    </location>
</feature>
<feature type="helix" evidence="3">
    <location>
        <begin position="295"/>
        <end position="305"/>
    </location>
</feature>
<feature type="strand" evidence="3">
    <location>
        <begin position="308"/>
        <end position="311"/>
    </location>
</feature>
<feature type="strand" evidence="3">
    <location>
        <begin position="317"/>
        <end position="319"/>
    </location>
</feature>
<feature type="helix" evidence="3">
    <location>
        <begin position="323"/>
        <end position="334"/>
    </location>
</feature>
<feature type="strand" evidence="3">
    <location>
        <begin position="344"/>
        <end position="350"/>
    </location>
</feature>
<feature type="helix" evidence="3">
    <location>
        <begin position="353"/>
        <end position="355"/>
    </location>
</feature>
<feature type="helix" evidence="3">
    <location>
        <begin position="356"/>
        <end position="363"/>
    </location>
</feature>
<feature type="strand" evidence="3">
    <location>
        <begin position="368"/>
        <end position="370"/>
    </location>
</feature>
<feature type="helix" evidence="3">
    <location>
        <begin position="372"/>
        <end position="376"/>
    </location>
</feature>
<feature type="helix" evidence="3">
    <location>
        <begin position="382"/>
        <end position="398"/>
    </location>
</feature>
<feature type="helix" evidence="3">
    <location>
        <begin position="402"/>
        <end position="405"/>
    </location>
</feature>
<feature type="turn" evidence="2">
    <location>
        <begin position="406"/>
        <end position="408"/>
    </location>
</feature>
<feature type="helix" evidence="3">
    <location>
        <begin position="410"/>
        <end position="422"/>
    </location>
</feature>
<evidence type="ECO:0000255" key="1">
    <source>
        <dbReference type="HAMAP-Rule" id="MF_01133"/>
    </source>
</evidence>
<evidence type="ECO:0007829" key="2">
    <source>
        <dbReference type="PDB" id="2CXE"/>
    </source>
</evidence>
<evidence type="ECO:0007829" key="3">
    <source>
        <dbReference type="PDB" id="2D69"/>
    </source>
</evidence>
<proteinExistence type="evidence at protein level"/>
<accession>O58677</accession>
<protein>
    <recommendedName>
        <fullName evidence="1">Ribulose bisphosphate carboxylase</fullName>
        <shortName evidence="1">RuBisCO</shortName>
        <ecNumber evidence="1">4.1.1.39</ecNumber>
    </recommendedName>
</protein>
<keyword id="KW-0002">3D-structure</keyword>
<keyword id="KW-0120">Carbon dioxide fixation</keyword>
<keyword id="KW-0456">Lyase</keyword>
<keyword id="KW-0460">Magnesium</keyword>
<keyword id="KW-0479">Metal-binding</keyword>
<keyword id="KW-0560">Oxidoreductase</keyword>
<gene>
    <name evidence="1" type="primary">rbcL</name>
    <name type="ordered locus">PH0939</name>
</gene>
<reference key="1">
    <citation type="journal article" date="1998" name="DNA Res.">
        <title>Complete sequence and gene organization of the genome of a hyper-thermophilic archaebacterium, Pyrococcus horikoshii OT3.</title>
        <authorList>
            <person name="Kawarabayasi Y."/>
            <person name="Sawada M."/>
            <person name="Horikawa H."/>
            <person name="Haikawa Y."/>
            <person name="Hino Y."/>
            <person name="Yamamoto S."/>
            <person name="Sekine M."/>
            <person name="Baba S."/>
            <person name="Kosugi H."/>
            <person name="Hosoyama A."/>
            <person name="Nagai Y."/>
            <person name="Sakai M."/>
            <person name="Ogura K."/>
            <person name="Otsuka R."/>
            <person name="Nakazawa H."/>
            <person name="Takamiya M."/>
            <person name="Ohfuku Y."/>
            <person name="Funahashi T."/>
            <person name="Tanaka T."/>
            <person name="Kudoh Y."/>
            <person name="Yamazaki J."/>
            <person name="Kushida N."/>
            <person name="Oguchi A."/>
            <person name="Aoki K."/>
            <person name="Yoshizawa T."/>
            <person name="Nakamura Y."/>
            <person name="Robb F.T."/>
            <person name="Horikoshi K."/>
            <person name="Masuchi Y."/>
            <person name="Shizuya H."/>
            <person name="Kikuchi H."/>
        </authorList>
    </citation>
    <scope>NUCLEOTIDE SEQUENCE [LARGE SCALE GENOMIC DNA]</scope>
    <source>
        <strain>ATCC 700860 / DSM 12428 / JCM 9974 / NBRC 100139 / OT-3</strain>
    </source>
</reference>
<reference key="2">
    <citation type="submission" date="2005-06" db="PDB data bank">
        <title>Crystal structure of octameric ribulose-1,5-bisphosphate carboxylase/oxygenase (Rubisco) from Pyrococcus horikoshii OT3 (form-1 crystal).</title>
        <authorList>
            <consortium name="RIKEN structural genomics initiative (RSGI)"/>
        </authorList>
    </citation>
    <scope>X-RAY CRYSTALLOGRAPHY (2.0 ANGSTROMS)</scope>
</reference>
<comment type="function">
    <text evidence="1">Catalyzes the addition of molecular CO(2) and H(2)O to ribulose 1,5-bisphosphate (RuBP), generating two molecules of 3-phosphoglycerate (3-PGA). Functions in an archaeal AMP degradation pathway, together with AMP phosphorylase and R15P isomerase.</text>
</comment>
<comment type="catalytic activity">
    <reaction evidence="1">
        <text>2 (2R)-3-phosphoglycerate + 2 H(+) = D-ribulose 1,5-bisphosphate + CO2 + H2O</text>
        <dbReference type="Rhea" id="RHEA:23124"/>
        <dbReference type="ChEBI" id="CHEBI:15377"/>
        <dbReference type="ChEBI" id="CHEBI:15378"/>
        <dbReference type="ChEBI" id="CHEBI:16526"/>
        <dbReference type="ChEBI" id="CHEBI:57870"/>
        <dbReference type="ChEBI" id="CHEBI:58272"/>
        <dbReference type="EC" id="4.1.1.39"/>
    </reaction>
</comment>
<comment type="catalytic activity">
    <reaction evidence="1">
        <text>D-ribulose 1,5-bisphosphate + O2 = 2-phosphoglycolate + (2R)-3-phosphoglycerate + 2 H(+)</text>
        <dbReference type="Rhea" id="RHEA:36631"/>
        <dbReference type="ChEBI" id="CHEBI:15378"/>
        <dbReference type="ChEBI" id="CHEBI:15379"/>
        <dbReference type="ChEBI" id="CHEBI:57870"/>
        <dbReference type="ChEBI" id="CHEBI:58033"/>
        <dbReference type="ChEBI" id="CHEBI:58272"/>
    </reaction>
</comment>
<comment type="cofactor">
    <cofactor evidence="1">
        <name>Mg(2+)</name>
        <dbReference type="ChEBI" id="CHEBI:18420"/>
    </cofactor>
    <text evidence="1">Binds 1 Mg(2+) ion per subunit.</text>
</comment>
<comment type="subunit">
    <text evidence="1">Homodimer or homodecamer. In contrast to form I RuBisCO, the form III RuBisCO is composed solely of large subunits.</text>
</comment>
<comment type="miscellaneous">
    <text evidence="1">Because the Archaea possessing a type III RuBisCO are all anaerobic, it is most likely that only the carboxylase activity of RuBisCO, and not the competitive oxygenase activity (by which RuBP reacts with O(2) to form one molecule of 3-phosphoglycerate and one molecule of 2-phosphoglycolate), is biologically relevant in these strains.</text>
</comment>
<comment type="similarity">
    <text evidence="1">Belongs to the RuBisCO large chain family. Type III subfamily.</text>
</comment>
<name>RBL_PYRHO</name>